<organism>
    <name type="scientific">Nitrobacter hamburgensis (strain DSM 10229 / NCIMB 13809 / X14)</name>
    <dbReference type="NCBI Taxonomy" id="323097"/>
    <lineage>
        <taxon>Bacteria</taxon>
        <taxon>Pseudomonadati</taxon>
        <taxon>Pseudomonadota</taxon>
        <taxon>Alphaproteobacteria</taxon>
        <taxon>Hyphomicrobiales</taxon>
        <taxon>Nitrobacteraceae</taxon>
        <taxon>Nitrobacter</taxon>
    </lineage>
</organism>
<reference key="1">
    <citation type="submission" date="2006-03" db="EMBL/GenBank/DDBJ databases">
        <title>Complete sequence of chromosome of Nitrobacter hamburgensis X14.</title>
        <authorList>
            <consortium name="US DOE Joint Genome Institute"/>
            <person name="Copeland A."/>
            <person name="Lucas S."/>
            <person name="Lapidus A."/>
            <person name="Barry K."/>
            <person name="Detter J.C."/>
            <person name="Glavina del Rio T."/>
            <person name="Hammon N."/>
            <person name="Israni S."/>
            <person name="Dalin E."/>
            <person name="Tice H."/>
            <person name="Pitluck S."/>
            <person name="Chain P."/>
            <person name="Malfatti S."/>
            <person name="Shin M."/>
            <person name="Vergez L."/>
            <person name="Schmutz J."/>
            <person name="Larimer F."/>
            <person name="Land M."/>
            <person name="Hauser L."/>
            <person name="Kyrpides N."/>
            <person name="Ivanova N."/>
            <person name="Ward B."/>
            <person name="Arp D."/>
            <person name="Klotz M."/>
            <person name="Stein L."/>
            <person name="O'Mullan G."/>
            <person name="Starkenburg S."/>
            <person name="Sayavedra L."/>
            <person name="Poret-Peterson A.T."/>
            <person name="Gentry M.E."/>
            <person name="Bruce D."/>
            <person name="Richardson P."/>
        </authorList>
    </citation>
    <scope>NUCLEOTIDE SEQUENCE [LARGE SCALE GENOMIC DNA]</scope>
    <source>
        <strain>DSM 10229 / NCIMB 13809 / X14</strain>
    </source>
</reference>
<accession>Q1QMM7</accession>
<dbReference type="EC" id="4.2.1.59" evidence="1"/>
<dbReference type="EMBL" id="CP000319">
    <property type="protein sequence ID" value="ABE62520.1"/>
    <property type="molecule type" value="Genomic_DNA"/>
</dbReference>
<dbReference type="RefSeq" id="WP_011510202.1">
    <property type="nucleotide sequence ID" value="NC_007964.1"/>
</dbReference>
<dbReference type="SMR" id="Q1QMM7"/>
<dbReference type="STRING" id="323097.Nham_1704"/>
<dbReference type="KEGG" id="nha:Nham_1704"/>
<dbReference type="eggNOG" id="COG0764">
    <property type="taxonomic scope" value="Bacteria"/>
</dbReference>
<dbReference type="HOGENOM" id="CLU_078912_1_0_5"/>
<dbReference type="OrthoDB" id="9772788at2"/>
<dbReference type="Proteomes" id="UP000001953">
    <property type="component" value="Chromosome"/>
</dbReference>
<dbReference type="GO" id="GO:0005737">
    <property type="term" value="C:cytoplasm"/>
    <property type="evidence" value="ECO:0007669"/>
    <property type="project" value="UniProtKB-SubCell"/>
</dbReference>
<dbReference type="GO" id="GO:0016020">
    <property type="term" value="C:membrane"/>
    <property type="evidence" value="ECO:0007669"/>
    <property type="project" value="GOC"/>
</dbReference>
<dbReference type="GO" id="GO:0019171">
    <property type="term" value="F:(3R)-hydroxyacyl-[acyl-carrier-protein] dehydratase activity"/>
    <property type="evidence" value="ECO:0007669"/>
    <property type="project" value="UniProtKB-EC"/>
</dbReference>
<dbReference type="GO" id="GO:0006633">
    <property type="term" value="P:fatty acid biosynthetic process"/>
    <property type="evidence" value="ECO:0007669"/>
    <property type="project" value="UniProtKB-UniRule"/>
</dbReference>
<dbReference type="GO" id="GO:0009245">
    <property type="term" value="P:lipid A biosynthetic process"/>
    <property type="evidence" value="ECO:0007669"/>
    <property type="project" value="UniProtKB-UniRule"/>
</dbReference>
<dbReference type="CDD" id="cd01288">
    <property type="entry name" value="FabZ"/>
    <property type="match status" value="1"/>
</dbReference>
<dbReference type="FunFam" id="3.10.129.10:FF:000001">
    <property type="entry name" value="3-hydroxyacyl-[acyl-carrier-protein] dehydratase FabZ"/>
    <property type="match status" value="1"/>
</dbReference>
<dbReference type="Gene3D" id="3.10.129.10">
    <property type="entry name" value="Hotdog Thioesterase"/>
    <property type="match status" value="1"/>
</dbReference>
<dbReference type="HAMAP" id="MF_00406">
    <property type="entry name" value="FabZ"/>
    <property type="match status" value="1"/>
</dbReference>
<dbReference type="InterPro" id="IPR013114">
    <property type="entry name" value="FabA_FabZ"/>
</dbReference>
<dbReference type="InterPro" id="IPR010084">
    <property type="entry name" value="FabZ"/>
</dbReference>
<dbReference type="InterPro" id="IPR029069">
    <property type="entry name" value="HotDog_dom_sf"/>
</dbReference>
<dbReference type="NCBIfam" id="TIGR01750">
    <property type="entry name" value="fabZ"/>
    <property type="match status" value="1"/>
</dbReference>
<dbReference type="NCBIfam" id="NF000582">
    <property type="entry name" value="PRK00006.1"/>
    <property type="match status" value="1"/>
</dbReference>
<dbReference type="PANTHER" id="PTHR30272">
    <property type="entry name" value="3-HYDROXYACYL-[ACYL-CARRIER-PROTEIN] DEHYDRATASE"/>
    <property type="match status" value="1"/>
</dbReference>
<dbReference type="PANTHER" id="PTHR30272:SF1">
    <property type="entry name" value="3-HYDROXYACYL-[ACYL-CARRIER-PROTEIN] DEHYDRATASE"/>
    <property type="match status" value="1"/>
</dbReference>
<dbReference type="Pfam" id="PF07977">
    <property type="entry name" value="FabA"/>
    <property type="match status" value="1"/>
</dbReference>
<dbReference type="SUPFAM" id="SSF54637">
    <property type="entry name" value="Thioesterase/thiol ester dehydrase-isomerase"/>
    <property type="match status" value="1"/>
</dbReference>
<keyword id="KW-0963">Cytoplasm</keyword>
<keyword id="KW-0441">Lipid A biosynthesis</keyword>
<keyword id="KW-0444">Lipid biosynthesis</keyword>
<keyword id="KW-0443">Lipid metabolism</keyword>
<keyword id="KW-0456">Lyase</keyword>
<keyword id="KW-1185">Reference proteome</keyword>
<gene>
    <name evidence="1" type="primary">fabZ</name>
    <name type="ordered locus">Nham_1704</name>
</gene>
<evidence type="ECO:0000255" key="1">
    <source>
        <dbReference type="HAMAP-Rule" id="MF_00406"/>
    </source>
</evidence>
<proteinExistence type="inferred from homology"/>
<protein>
    <recommendedName>
        <fullName evidence="1">3-hydroxyacyl-[acyl-carrier-protein] dehydratase FabZ</fullName>
        <ecNumber evidence="1">4.2.1.59</ecNumber>
    </recommendedName>
    <alternativeName>
        <fullName evidence="1">(3R)-hydroxymyristoyl-[acyl-carrier-protein] dehydratase</fullName>
        <shortName evidence="1">(3R)-hydroxymyristoyl-ACP dehydrase</shortName>
    </alternativeName>
    <alternativeName>
        <fullName evidence="1">Beta-hydroxyacyl-ACP dehydratase</fullName>
    </alternativeName>
</protein>
<comment type="function">
    <text evidence="1">Involved in unsaturated fatty acids biosynthesis. Catalyzes the dehydration of short chain beta-hydroxyacyl-ACPs and long chain saturated and unsaturated beta-hydroxyacyl-ACPs.</text>
</comment>
<comment type="catalytic activity">
    <reaction evidence="1">
        <text>a (3R)-hydroxyacyl-[ACP] = a (2E)-enoyl-[ACP] + H2O</text>
        <dbReference type="Rhea" id="RHEA:13097"/>
        <dbReference type="Rhea" id="RHEA-COMP:9925"/>
        <dbReference type="Rhea" id="RHEA-COMP:9945"/>
        <dbReference type="ChEBI" id="CHEBI:15377"/>
        <dbReference type="ChEBI" id="CHEBI:78784"/>
        <dbReference type="ChEBI" id="CHEBI:78827"/>
        <dbReference type="EC" id="4.2.1.59"/>
    </reaction>
</comment>
<comment type="subcellular location">
    <subcellularLocation>
        <location evidence="1">Cytoplasm</location>
    </subcellularLocation>
</comment>
<comment type="similarity">
    <text evidence="1">Belongs to the thioester dehydratase family. FabZ subfamily.</text>
</comment>
<feature type="chain" id="PRO_0000301906" description="3-hydroxyacyl-[acyl-carrier-protein] dehydratase FabZ">
    <location>
        <begin position="1"/>
        <end position="151"/>
    </location>
</feature>
<feature type="active site" evidence="1">
    <location>
        <position position="56"/>
    </location>
</feature>
<sequence length="151" mass="16883">MESPIKFEEVDIATILKTLPHRYPFLLIDRVINIRADHSGIGVKNVTINEPAFQGHFPERPVYPGVLMIEGMAQTAGVIGITSVEGTEKPRAVYFLTIDKCKFRKPVMPGDIVEYHMRSIGRRKTMWWFHGDAKVNGATVAEADVGAMLTD</sequence>
<name>FABZ_NITHX</name>